<protein>
    <recommendedName>
        <fullName evidence="2">Superoxide dismutase [Cu-Zn]</fullName>
        <ecNumber>1.15.1.1</ecNumber>
    </recommendedName>
    <alternativeName>
        <fullName evidence="2">Superoxide dismutase 1</fullName>
    </alternativeName>
</protein>
<name>SODC_DROPE</name>
<evidence type="ECO:0000250" key="1"/>
<evidence type="ECO:0000250" key="2">
    <source>
        <dbReference type="UniProtKB" id="P61851"/>
    </source>
</evidence>
<evidence type="ECO:0000256" key="3">
    <source>
        <dbReference type="SAM" id="MobiDB-lite"/>
    </source>
</evidence>
<evidence type="ECO:0000305" key="4"/>
<organism>
    <name type="scientific">Drosophila persimilis</name>
    <name type="common">Fruit fly</name>
    <dbReference type="NCBI Taxonomy" id="7234"/>
    <lineage>
        <taxon>Eukaryota</taxon>
        <taxon>Metazoa</taxon>
        <taxon>Ecdysozoa</taxon>
        <taxon>Arthropoda</taxon>
        <taxon>Hexapoda</taxon>
        <taxon>Insecta</taxon>
        <taxon>Pterygota</taxon>
        <taxon>Neoptera</taxon>
        <taxon>Endopterygota</taxon>
        <taxon>Diptera</taxon>
        <taxon>Brachycera</taxon>
        <taxon>Muscomorpha</taxon>
        <taxon>Ephydroidea</taxon>
        <taxon>Drosophilidae</taxon>
        <taxon>Drosophila</taxon>
        <taxon>Sophophora</taxon>
    </lineage>
</organism>
<accession>Q95088</accession>
<proteinExistence type="inferred from homology"/>
<keyword id="KW-0049">Antioxidant</keyword>
<keyword id="KW-0186">Copper</keyword>
<keyword id="KW-0963">Cytoplasm</keyword>
<keyword id="KW-0479">Metal-binding</keyword>
<keyword id="KW-0560">Oxidoreductase</keyword>
<keyword id="KW-0862">Zinc</keyword>
<reference key="1">
    <citation type="journal article" date="1997" name="Mol. Phylogenet. Evol.">
        <title>Evolution of the Drosophila obscura species group inferred from the Gpdh and Sod genes.</title>
        <authorList>
            <person name="Barrio E."/>
            <person name="Ayala F.J."/>
        </authorList>
    </citation>
    <scope>NUCLEOTIDE SEQUENCE [GENOMIC DNA]</scope>
    <source>
        <strain>NDSSC 14011-0111.2</strain>
    </source>
</reference>
<feature type="chain" id="PRO_0000164091" description="Superoxide dismutase [Cu-Zn]">
    <location>
        <begin position="1" status="less than"/>
        <end position="114" status="greater than"/>
    </location>
</feature>
<feature type="region of interest" description="Disordered" evidence="3">
    <location>
        <begin position="48"/>
        <end position="68"/>
    </location>
</feature>
<feature type="compositionally biased region" description="Basic and acidic residues" evidence="3">
    <location>
        <begin position="58"/>
        <end position="68"/>
    </location>
</feature>
<feature type="binding site" evidence="1">
    <location>
        <position position="37"/>
    </location>
    <ligand>
        <name>Cu cation</name>
        <dbReference type="ChEBI" id="CHEBI:23378"/>
        <note>catalytic</note>
    </ligand>
</feature>
<feature type="binding site" evidence="1">
    <location>
        <position position="39"/>
    </location>
    <ligand>
        <name>Cu cation</name>
        <dbReference type="ChEBI" id="CHEBI:23378"/>
        <note>catalytic</note>
    </ligand>
</feature>
<feature type="binding site" evidence="1">
    <location>
        <position position="54"/>
    </location>
    <ligand>
        <name>Cu cation</name>
        <dbReference type="ChEBI" id="CHEBI:23378"/>
        <note>catalytic</note>
    </ligand>
</feature>
<feature type="binding site" evidence="1">
    <location>
        <position position="54"/>
    </location>
    <ligand>
        <name>Zn(2+)</name>
        <dbReference type="ChEBI" id="CHEBI:29105"/>
        <note>structural</note>
    </ligand>
</feature>
<feature type="binding site" evidence="1">
    <location>
        <position position="62"/>
    </location>
    <ligand>
        <name>Zn(2+)</name>
        <dbReference type="ChEBI" id="CHEBI:29105"/>
        <note>structural</note>
    </ligand>
</feature>
<feature type="binding site" evidence="1">
    <location>
        <position position="71"/>
    </location>
    <ligand>
        <name>Zn(2+)</name>
        <dbReference type="ChEBI" id="CHEBI:29105"/>
        <note>structural</note>
    </ligand>
</feature>
<feature type="binding site" evidence="1">
    <location>
        <position position="74"/>
    </location>
    <ligand>
        <name>Zn(2+)</name>
        <dbReference type="ChEBI" id="CHEBI:29105"/>
        <note>structural</note>
    </ligand>
</feature>
<feature type="binding site" evidence="1">
    <location>
        <position position="111"/>
    </location>
    <ligand>
        <name>Cu cation</name>
        <dbReference type="ChEBI" id="CHEBI:23378"/>
        <note>catalytic</note>
    </ligand>
</feature>
<feature type="non-terminal residue">
    <location>
        <position position="1"/>
    </location>
</feature>
<feature type="non-terminal residue">
    <location>
        <position position="114"/>
    </location>
</feature>
<sequence>INGDAKGTVFFEQETSEAPVKVTGEGLGLAKGLHGFHVHEFGDNTNGCMSSGPHFNPRNKEHGAPTDENRHLGDLGNIQAAGDSPTAVSITDSKITLFGADSIIGRTVVVHADA</sequence>
<gene>
    <name evidence="2" type="primary">Sod1</name>
    <name evidence="2" type="synonym">Sod</name>
</gene>
<dbReference type="EC" id="1.15.1.1"/>
<dbReference type="EMBL" id="U47873">
    <property type="protein sequence ID" value="AAB50305.1"/>
    <property type="molecule type" value="Genomic_DNA"/>
</dbReference>
<dbReference type="SMR" id="Q95088"/>
<dbReference type="eggNOG" id="KOG0441">
    <property type="taxonomic scope" value="Eukaryota"/>
</dbReference>
<dbReference type="OrthoDB" id="2015551at2759"/>
<dbReference type="GO" id="GO:0005777">
    <property type="term" value="C:peroxisome"/>
    <property type="evidence" value="ECO:0007669"/>
    <property type="project" value="EnsemblMetazoa"/>
</dbReference>
<dbReference type="GO" id="GO:0005507">
    <property type="term" value="F:copper ion binding"/>
    <property type="evidence" value="ECO:0007669"/>
    <property type="project" value="InterPro"/>
</dbReference>
<dbReference type="GO" id="GO:0042803">
    <property type="term" value="F:protein homodimerization activity"/>
    <property type="evidence" value="ECO:0007669"/>
    <property type="project" value="EnsemblMetazoa"/>
</dbReference>
<dbReference type="GO" id="GO:0004784">
    <property type="term" value="F:superoxide dismutase activity"/>
    <property type="evidence" value="ECO:0007669"/>
    <property type="project" value="UniProtKB-EC"/>
</dbReference>
<dbReference type="GO" id="GO:0008340">
    <property type="term" value="P:determination of adult lifespan"/>
    <property type="evidence" value="ECO:0007669"/>
    <property type="project" value="EnsemblMetazoa"/>
</dbReference>
<dbReference type="GO" id="GO:1901526">
    <property type="term" value="P:positive regulation of mitophagy"/>
    <property type="evidence" value="ECO:0007669"/>
    <property type="project" value="EnsemblMetazoa"/>
</dbReference>
<dbReference type="GO" id="GO:0048167">
    <property type="term" value="P:regulation of synaptic plasticity"/>
    <property type="evidence" value="ECO:0007669"/>
    <property type="project" value="EnsemblMetazoa"/>
</dbReference>
<dbReference type="CDD" id="cd00305">
    <property type="entry name" value="Cu-Zn_Superoxide_Dismutase"/>
    <property type="match status" value="1"/>
</dbReference>
<dbReference type="Gene3D" id="2.60.40.200">
    <property type="entry name" value="Superoxide dismutase, copper/zinc binding domain"/>
    <property type="match status" value="1"/>
</dbReference>
<dbReference type="InterPro" id="IPR036423">
    <property type="entry name" value="SOD-like_Cu/Zn_dom_sf"/>
</dbReference>
<dbReference type="InterPro" id="IPR024134">
    <property type="entry name" value="SOD_Cu/Zn_/chaperone"/>
</dbReference>
<dbReference type="InterPro" id="IPR018152">
    <property type="entry name" value="SOD_Cu/Zn_BS"/>
</dbReference>
<dbReference type="InterPro" id="IPR001424">
    <property type="entry name" value="SOD_Cu_Zn_dom"/>
</dbReference>
<dbReference type="PANTHER" id="PTHR10003">
    <property type="entry name" value="SUPEROXIDE DISMUTASE CU-ZN -RELATED"/>
    <property type="match status" value="1"/>
</dbReference>
<dbReference type="Pfam" id="PF00080">
    <property type="entry name" value="Sod_Cu"/>
    <property type="match status" value="1"/>
</dbReference>
<dbReference type="PRINTS" id="PR00068">
    <property type="entry name" value="CUZNDISMTASE"/>
</dbReference>
<dbReference type="SUPFAM" id="SSF49329">
    <property type="entry name" value="Cu,Zn superoxide dismutase-like"/>
    <property type="match status" value="1"/>
</dbReference>
<dbReference type="PROSITE" id="PS00087">
    <property type="entry name" value="SOD_CU_ZN_1"/>
    <property type="match status" value="1"/>
</dbReference>
<comment type="function">
    <text>Destroys radicals which are normally produced within the cells and which are toxic to biological systems.</text>
</comment>
<comment type="catalytic activity">
    <reaction>
        <text>2 superoxide + 2 H(+) = H2O2 + O2</text>
        <dbReference type="Rhea" id="RHEA:20696"/>
        <dbReference type="ChEBI" id="CHEBI:15378"/>
        <dbReference type="ChEBI" id="CHEBI:15379"/>
        <dbReference type="ChEBI" id="CHEBI:16240"/>
        <dbReference type="ChEBI" id="CHEBI:18421"/>
        <dbReference type="EC" id="1.15.1.1"/>
    </reaction>
</comment>
<comment type="cofactor">
    <cofactor evidence="1">
        <name>Cu cation</name>
        <dbReference type="ChEBI" id="CHEBI:23378"/>
    </cofactor>
    <text evidence="1">Binds 1 copper ion per subunit.</text>
</comment>
<comment type="cofactor">
    <cofactor evidence="1">
        <name>Zn(2+)</name>
        <dbReference type="ChEBI" id="CHEBI:29105"/>
    </cofactor>
    <text evidence="1">Binds 1 zinc ion per subunit.</text>
</comment>
<comment type="subunit">
    <text evidence="1">Homodimer.</text>
</comment>
<comment type="subcellular location">
    <subcellularLocation>
        <location>Cytoplasm</location>
    </subcellularLocation>
</comment>
<comment type="similarity">
    <text evidence="4">Belongs to the Cu-Zn superoxide dismutase family.</text>
</comment>